<comment type="function">
    <text evidence="1">Catalyzes the methylthiolation of N6-(dimethylallyl)adenosine (i(6)A), leading to the formation of 2-methylthio-N6-(dimethylallyl)adenosine (ms(2)i(6)A) at position 37 in tRNAs that read codons beginning with uridine.</text>
</comment>
<comment type="catalytic activity">
    <reaction evidence="1">
        <text>N(6)-dimethylallyladenosine(37) in tRNA + (sulfur carrier)-SH + AH2 + 2 S-adenosyl-L-methionine = 2-methylsulfanyl-N(6)-dimethylallyladenosine(37) in tRNA + (sulfur carrier)-H + 5'-deoxyadenosine + L-methionine + A + S-adenosyl-L-homocysteine + 2 H(+)</text>
        <dbReference type="Rhea" id="RHEA:37067"/>
        <dbReference type="Rhea" id="RHEA-COMP:10375"/>
        <dbReference type="Rhea" id="RHEA-COMP:10376"/>
        <dbReference type="Rhea" id="RHEA-COMP:14737"/>
        <dbReference type="Rhea" id="RHEA-COMP:14739"/>
        <dbReference type="ChEBI" id="CHEBI:13193"/>
        <dbReference type="ChEBI" id="CHEBI:15378"/>
        <dbReference type="ChEBI" id="CHEBI:17319"/>
        <dbReference type="ChEBI" id="CHEBI:17499"/>
        <dbReference type="ChEBI" id="CHEBI:29917"/>
        <dbReference type="ChEBI" id="CHEBI:57844"/>
        <dbReference type="ChEBI" id="CHEBI:57856"/>
        <dbReference type="ChEBI" id="CHEBI:59789"/>
        <dbReference type="ChEBI" id="CHEBI:64428"/>
        <dbReference type="ChEBI" id="CHEBI:74415"/>
        <dbReference type="ChEBI" id="CHEBI:74417"/>
        <dbReference type="EC" id="2.8.4.3"/>
    </reaction>
</comment>
<comment type="cofactor">
    <cofactor evidence="1">
        <name>[4Fe-4S] cluster</name>
        <dbReference type="ChEBI" id="CHEBI:49883"/>
    </cofactor>
    <text evidence="1">Binds 2 [4Fe-4S] clusters. One cluster is coordinated with 3 cysteines and an exchangeable S-adenosyl-L-methionine.</text>
</comment>
<comment type="subunit">
    <text evidence="1">Monomer.</text>
</comment>
<comment type="subcellular location">
    <subcellularLocation>
        <location evidence="1">Cytoplasm</location>
    </subcellularLocation>
</comment>
<comment type="similarity">
    <text evidence="1">Belongs to the methylthiotransferase family. MiaB subfamily.</text>
</comment>
<dbReference type="EC" id="2.8.4.3" evidence="1"/>
<dbReference type="EMBL" id="CP000612">
    <property type="protein sequence ID" value="ABO50411.1"/>
    <property type="molecule type" value="Genomic_DNA"/>
</dbReference>
<dbReference type="RefSeq" id="WP_011878223.1">
    <property type="nucleotide sequence ID" value="NC_009253.1"/>
</dbReference>
<dbReference type="SMR" id="A4J5Q8"/>
<dbReference type="STRING" id="349161.Dred_1889"/>
<dbReference type="KEGG" id="drm:Dred_1889"/>
<dbReference type="eggNOG" id="COG0621">
    <property type="taxonomic scope" value="Bacteria"/>
</dbReference>
<dbReference type="HOGENOM" id="CLU_018697_2_0_9"/>
<dbReference type="OrthoDB" id="9805215at2"/>
<dbReference type="Proteomes" id="UP000001556">
    <property type="component" value="Chromosome"/>
</dbReference>
<dbReference type="GO" id="GO:0005829">
    <property type="term" value="C:cytosol"/>
    <property type="evidence" value="ECO:0007669"/>
    <property type="project" value="TreeGrafter"/>
</dbReference>
<dbReference type="GO" id="GO:0051539">
    <property type="term" value="F:4 iron, 4 sulfur cluster binding"/>
    <property type="evidence" value="ECO:0007669"/>
    <property type="project" value="UniProtKB-UniRule"/>
</dbReference>
<dbReference type="GO" id="GO:0046872">
    <property type="term" value="F:metal ion binding"/>
    <property type="evidence" value="ECO:0007669"/>
    <property type="project" value="UniProtKB-KW"/>
</dbReference>
<dbReference type="GO" id="GO:0035597">
    <property type="term" value="F:N6-isopentenyladenosine methylthiotransferase activity"/>
    <property type="evidence" value="ECO:0007669"/>
    <property type="project" value="TreeGrafter"/>
</dbReference>
<dbReference type="CDD" id="cd01335">
    <property type="entry name" value="Radical_SAM"/>
    <property type="match status" value="1"/>
</dbReference>
<dbReference type="FunFam" id="3.40.50.12160:FF:000006">
    <property type="entry name" value="tRNA-2-methylthio-N(6)-dimethylallyladenosine synthase"/>
    <property type="match status" value="1"/>
</dbReference>
<dbReference type="FunFam" id="3.80.30.20:FF:000001">
    <property type="entry name" value="tRNA-2-methylthio-N(6)-dimethylallyladenosine synthase 2"/>
    <property type="match status" value="1"/>
</dbReference>
<dbReference type="Gene3D" id="3.40.50.12160">
    <property type="entry name" value="Methylthiotransferase, N-terminal domain"/>
    <property type="match status" value="1"/>
</dbReference>
<dbReference type="Gene3D" id="3.80.30.20">
    <property type="entry name" value="tm_1862 like domain"/>
    <property type="match status" value="1"/>
</dbReference>
<dbReference type="HAMAP" id="MF_01864">
    <property type="entry name" value="tRNA_metthiotr_MiaB"/>
    <property type="match status" value="1"/>
</dbReference>
<dbReference type="InterPro" id="IPR006638">
    <property type="entry name" value="Elp3/MiaA/NifB-like_rSAM"/>
</dbReference>
<dbReference type="InterPro" id="IPR005839">
    <property type="entry name" value="Methylthiotransferase"/>
</dbReference>
<dbReference type="InterPro" id="IPR020612">
    <property type="entry name" value="Methylthiotransferase_CS"/>
</dbReference>
<dbReference type="InterPro" id="IPR013848">
    <property type="entry name" value="Methylthiotransferase_N"/>
</dbReference>
<dbReference type="InterPro" id="IPR038135">
    <property type="entry name" value="Methylthiotransferase_N_sf"/>
</dbReference>
<dbReference type="InterPro" id="IPR006463">
    <property type="entry name" value="MiaB_methiolase"/>
</dbReference>
<dbReference type="InterPro" id="IPR007197">
    <property type="entry name" value="rSAM"/>
</dbReference>
<dbReference type="InterPro" id="IPR023404">
    <property type="entry name" value="rSAM_horseshoe"/>
</dbReference>
<dbReference type="InterPro" id="IPR002792">
    <property type="entry name" value="TRAM_dom"/>
</dbReference>
<dbReference type="NCBIfam" id="TIGR01574">
    <property type="entry name" value="miaB-methiolase"/>
    <property type="match status" value="1"/>
</dbReference>
<dbReference type="NCBIfam" id="TIGR00089">
    <property type="entry name" value="MiaB/RimO family radical SAM methylthiotransferase"/>
    <property type="match status" value="1"/>
</dbReference>
<dbReference type="PANTHER" id="PTHR43020">
    <property type="entry name" value="CDK5 REGULATORY SUBUNIT-ASSOCIATED PROTEIN 1"/>
    <property type="match status" value="1"/>
</dbReference>
<dbReference type="PANTHER" id="PTHR43020:SF2">
    <property type="entry name" value="MITOCHONDRIAL TRNA METHYLTHIOTRANSFERASE CDK5RAP1"/>
    <property type="match status" value="1"/>
</dbReference>
<dbReference type="Pfam" id="PF04055">
    <property type="entry name" value="Radical_SAM"/>
    <property type="match status" value="1"/>
</dbReference>
<dbReference type="Pfam" id="PF01938">
    <property type="entry name" value="TRAM"/>
    <property type="match status" value="1"/>
</dbReference>
<dbReference type="Pfam" id="PF00919">
    <property type="entry name" value="UPF0004"/>
    <property type="match status" value="1"/>
</dbReference>
<dbReference type="SFLD" id="SFLDF00273">
    <property type="entry name" value="(dimethylallyl)adenosine_tRNA"/>
    <property type="match status" value="1"/>
</dbReference>
<dbReference type="SFLD" id="SFLDG01082">
    <property type="entry name" value="B12-binding_domain_containing"/>
    <property type="match status" value="1"/>
</dbReference>
<dbReference type="SFLD" id="SFLDS00029">
    <property type="entry name" value="Radical_SAM"/>
    <property type="match status" value="1"/>
</dbReference>
<dbReference type="SMART" id="SM00729">
    <property type="entry name" value="Elp3"/>
    <property type="match status" value="1"/>
</dbReference>
<dbReference type="SUPFAM" id="SSF102114">
    <property type="entry name" value="Radical SAM enzymes"/>
    <property type="match status" value="1"/>
</dbReference>
<dbReference type="PROSITE" id="PS51449">
    <property type="entry name" value="MTTASE_N"/>
    <property type="match status" value="1"/>
</dbReference>
<dbReference type="PROSITE" id="PS01278">
    <property type="entry name" value="MTTASE_RADICAL"/>
    <property type="match status" value="1"/>
</dbReference>
<dbReference type="PROSITE" id="PS51918">
    <property type="entry name" value="RADICAL_SAM"/>
    <property type="match status" value="1"/>
</dbReference>
<dbReference type="PROSITE" id="PS50926">
    <property type="entry name" value="TRAM"/>
    <property type="match status" value="1"/>
</dbReference>
<reference key="1">
    <citation type="submission" date="2007-03" db="EMBL/GenBank/DDBJ databases">
        <title>Complete sequence of Desulfotomaculum reducens MI-1.</title>
        <authorList>
            <consortium name="US DOE Joint Genome Institute"/>
            <person name="Copeland A."/>
            <person name="Lucas S."/>
            <person name="Lapidus A."/>
            <person name="Barry K."/>
            <person name="Detter J.C."/>
            <person name="Glavina del Rio T."/>
            <person name="Hammon N."/>
            <person name="Israni S."/>
            <person name="Dalin E."/>
            <person name="Tice H."/>
            <person name="Pitluck S."/>
            <person name="Sims D."/>
            <person name="Brettin T."/>
            <person name="Bruce D."/>
            <person name="Han C."/>
            <person name="Tapia R."/>
            <person name="Schmutz J."/>
            <person name="Larimer F."/>
            <person name="Land M."/>
            <person name="Hauser L."/>
            <person name="Kyrpides N."/>
            <person name="Kim E."/>
            <person name="Tebo B.M."/>
            <person name="Richardson P."/>
        </authorList>
    </citation>
    <scope>NUCLEOTIDE SEQUENCE [LARGE SCALE GENOMIC DNA]</scope>
    <source>
        <strain>ATCC BAA-1160 / DSM 100696 / MI-1</strain>
    </source>
</reference>
<gene>
    <name evidence="1" type="primary">miaB</name>
    <name type="ordered locus">Dred_1889</name>
</gene>
<sequence length="456" mass="51997">MAEKHQDKMTNAMNNSKLYLIQSFGCQMNERDAESLAGMLEDLGYCPTSAQEEADIILLNTCCVRETAESKVFGLLGRLRKLKVAKPDLILGVCGCMSQQEDAAKRIRRSFPFVDLIFGTHNIHELPRMIHQVQENHEAVLEVWATEKGITESIPVKRKDKLKAWVTIMYGCNNFCTYCIVPYVRGRERSRQPEDIIDEIKELVQEGYKEVTLLGQNVNSYGKDFKNNYRFADLLMAIDDITGLERVRFMTSHPRDFDQRLIEVVASAKKVCEHYHLPAQAGSNRVLKMMNRGYTREHYLELIRKIKERVPNASITADLMVGFPGETEEDFQETLDLVKQVRYDSAFTFVYNIRSGTPAAKLEQVSEEVKSERIQRLIELQNLISLENNQREEGRVLEVLVEGETKTNPDLLAGRTRTNKLVVFQGSGHLPGQLVQIRITKGRPNLLEGEVVPNGT</sequence>
<evidence type="ECO:0000255" key="1">
    <source>
        <dbReference type="HAMAP-Rule" id="MF_01864"/>
    </source>
</evidence>
<evidence type="ECO:0000255" key="2">
    <source>
        <dbReference type="PROSITE-ProRule" id="PRU01266"/>
    </source>
</evidence>
<name>MIAB_DESRM</name>
<keyword id="KW-0004">4Fe-4S</keyword>
<keyword id="KW-0963">Cytoplasm</keyword>
<keyword id="KW-0408">Iron</keyword>
<keyword id="KW-0411">Iron-sulfur</keyword>
<keyword id="KW-0479">Metal-binding</keyword>
<keyword id="KW-1185">Reference proteome</keyword>
<keyword id="KW-0949">S-adenosyl-L-methionine</keyword>
<keyword id="KW-0808">Transferase</keyword>
<keyword id="KW-0819">tRNA processing</keyword>
<proteinExistence type="inferred from homology"/>
<protein>
    <recommendedName>
        <fullName evidence="1">tRNA-2-methylthio-N(6)-dimethylallyladenosine synthase</fullName>
        <ecNumber evidence="1">2.8.4.3</ecNumber>
    </recommendedName>
    <alternativeName>
        <fullName evidence="1">(Dimethylallyl)adenosine tRNA methylthiotransferase MiaB</fullName>
    </alternativeName>
    <alternativeName>
        <fullName evidence="1">tRNA-i(6)A37 methylthiotransferase</fullName>
    </alternativeName>
</protein>
<accession>A4J5Q8</accession>
<organism>
    <name type="scientific">Desulforamulus reducens (strain ATCC BAA-1160 / DSM 100696 / MI-1)</name>
    <name type="common">Desulfotomaculum reducens</name>
    <dbReference type="NCBI Taxonomy" id="349161"/>
    <lineage>
        <taxon>Bacteria</taxon>
        <taxon>Bacillati</taxon>
        <taxon>Bacillota</taxon>
        <taxon>Clostridia</taxon>
        <taxon>Eubacteriales</taxon>
        <taxon>Peptococcaceae</taxon>
        <taxon>Desulforamulus</taxon>
    </lineage>
</organism>
<feature type="chain" id="PRO_0000374265" description="tRNA-2-methylthio-N(6)-dimethylallyladenosine synthase">
    <location>
        <begin position="1"/>
        <end position="456"/>
    </location>
</feature>
<feature type="domain" description="MTTase N-terminal" evidence="1">
    <location>
        <begin position="17"/>
        <end position="135"/>
    </location>
</feature>
<feature type="domain" description="Radical SAM core" evidence="2">
    <location>
        <begin position="158"/>
        <end position="387"/>
    </location>
</feature>
<feature type="domain" description="TRAM" evidence="1">
    <location>
        <begin position="390"/>
        <end position="453"/>
    </location>
</feature>
<feature type="binding site" evidence="1">
    <location>
        <position position="26"/>
    </location>
    <ligand>
        <name>[4Fe-4S] cluster</name>
        <dbReference type="ChEBI" id="CHEBI:49883"/>
        <label>1</label>
    </ligand>
</feature>
<feature type="binding site" evidence="1">
    <location>
        <position position="62"/>
    </location>
    <ligand>
        <name>[4Fe-4S] cluster</name>
        <dbReference type="ChEBI" id="CHEBI:49883"/>
        <label>1</label>
    </ligand>
</feature>
<feature type="binding site" evidence="1">
    <location>
        <position position="96"/>
    </location>
    <ligand>
        <name>[4Fe-4S] cluster</name>
        <dbReference type="ChEBI" id="CHEBI:49883"/>
        <label>1</label>
    </ligand>
</feature>
<feature type="binding site" evidence="1">
    <location>
        <position position="172"/>
    </location>
    <ligand>
        <name>[4Fe-4S] cluster</name>
        <dbReference type="ChEBI" id="CHEBI:49883"/>
        <label>2</label>
        <note>4Fe-4S-S-AdoMet</note>
    </ligand>
</feature>
<feature type="binding site" evidence="1">
    <location>
        <position position="176"/>
    </location>
    <ligand>
        <name>[4Fe-4S] cluster</name>
        <dbReference type="ChEBI" id="CHEBI:49883"/>
        <label>2</label>
        <note>4Fe-4S-S-AdoMet</note>
    </ligand>
</feature>
<feature type="binding site" evidence="1">
    <location>
        <position position="179"/>
    </location>
    <ligand>
        <name>[4Fe-4S] cluster</name>
        <dbReference type="ChEBI" id="CHEBI:49883"/>
        <label>2</label>
        <note>4Fe-4S-S-AdoMet</note>
    </ligand>
</feature>